<protein>
    <recommendedName>
        <fullName evidence="1">Probable transcriptional regulatory protein SPCG_1897</fullName>
    </recommendedName>
</protein>
<feature type="chain" id="PRO_1000132242" description="Probable transcriptional regulatory protein SPCG_1897">
    <location>
        <begin position="1"/>
        <end position="238"/>
    </location>
</feature>
<keyword id="KW-0963">Cytoplasm</keyword>
<keyword id="KW-0238">DNA-binding</keyword>
<keyword id="KW-0804">Transcription</keyword>
<keyword id="KW-0805">Transcription regulation</keyword>
<reference key="1">
    <citation type="journal article" date="2009" name="BMC Genomics">
        <title>Genome evolution driven by host adaptations results in a more virulent and antimicrobial-resistant Streptococcus pneumoniae serotype 14.</title>
        <authorList>
            <person name="Ding F."/>
            <person name="Tang P."/>
            <person name="Hsu M.-H."/>
            <person name="Cui P."/>
            <person name="Hu S."/>
            <person name="Yu J."/>
            <person name="Chiu C.-H."/>
        </authorList>
    </citation>
    <scope>NUCLEOTIDE SEQUENCE [LARGE SCALE GENOMIC DNA]</scope>
    <source>
        <strain>CGSP14</strain>
    </source>
</reference>
<accession>B2IM11</accession>
<dbReference type="EMBL" id="CP001033">
    <property type="protein sequence ID" value="ACB91149.1"/>
    <property type="molecule type" value="Genomic_DNA"/>
</dbReference>
<dbReference type="RefSeq" id="WP_000532876.1">
    <property type="nucleotide sequence ID" value="NC_010582.1"/>
</dbReference>
<dbReference type="SMR" id="B2IM11"/>
<dbReference type="KEGG" id="spw:SPCG_1897"/>
<dbReference type="HOGENOM" id="CLU_062974_2_0_9"/>
<dbReference type="GO" id="GO:0005829">
    <property type="term" value="C:cytosol"/>
    <property type="evidence" value="ECO:0007669"/>
    <property type="project" value="TreeGrafter"/>
</dbReference>
<dbReference type="GO" id="GO:0003677">
    <property type="term" value="F:DNA binding"/>
    <property type="evidence" value="ECO:0007669"/>
    <property type="project" value="UniProtKB-UniRule"/>
</dbReference>
<dbReference type="GO" id="GO:0006355">
    <property type="term" value="P:regulation of DNA-templated transcription"/>
    <property type="evidence" value="ECO:0007669"/>
    <property type="project" value="UniProtKB-UniRule"/>
</dbReference>
<dbReference type="FunFam" id="1.10.10.200:FF:000003">
    <property type="entry name" value="Probable transcriptional regulatory protein YeeN"/>
    <property type="match status" value="1"/>
</dbReference>
<dbReference type="FunFam" id="3.30.70.980:FF:000004">
    <property type="entry name" value="Probable transcriptional regulatory protein YeeN"/>
    <property type="match status" value="1"/>
</dbReference>
<dbReference type="Gene3D" id="1.10.10.200">
    <property type="match status" value="1"/>
</dbReference>
<dbReference type="Gene3D" id="3.30.70.980">
    <property type="match status" value="2"/>
</dbReference>
<dbReference type="HAMAP" id="MF_00693">
    <property type="entry name" value="Transcrip_reg_TACO1"/>
    <property type="match status" value="1"/>
</dbReference>
<dbReference type="HAMAP" id="MF_00918">
    <property type="entry name" value="Transcrip_reg_TACO1_YeeN"/>
    <property type="match status" value="1"/>
</dbReference>
<dbReference type="InterPro" id="IPR017856">
    <property type="entry name" value="Integrase-like_N"/>
</dbReference>
<dbReference type="InterPro" id="IPR048300">
    <property type="entry name" value="TACO1_YebC-like_2nd/3rd_dom"/>
</dbReference>
<dbReference type="InterPro" id="IPR049083">
    <property type="entry name" value="TACO1_YebC_N"/>
</dbReference>
<dbReference type="InterPro" id="IPR002876">
    <property type="entry name" value="Transcrip_reg_TACO1-like"/>
</dbReference>
<dbReference type="InterPro" id="IPR026564">
    <property type="entry name" value="Transcrip_reg_TACO1-like_dom3"/>
</dbReference>
<dbReference type="InterPro" id="IPR026562">
    <property type="entry name" value="Transcrip_reg_TACO1_YeeN"/>
</dbReference>
<dbReference type="InterPro" id="IPR029072">
    <property type="entry name" value="YebC-like"/>
</dbReference>
<dbReference type="NCBIfam" id="NF001030">
    <property type="entry name" value="PRK00110.1"/>
    <property type="match status" value="1"/>
</dbReference>
<dbReference type="NCBIfam" id="NF009044">
    <property type="entry name" value="PRK12378.1"/>
    <property type="match status" value="1"/>
</dbReference>
<dbReference type="NCBIfam" id="TIGR01033">
    <property type="entry name" value="YebC/PmpR family DNA-binding transcriptional regulator"/>
    <property type="match status" value="1"/>
</dbReference>
<dbReference type="PANTHER" id="PTHR12532">
    <property type="entry name" value="TRANSLATIONAL ACTIVATOR OF CYTOCHROME C OXIDASE 1"/>
    <property type="match status" value="1"/>
</dbReference>
<dbReference type="PANTHER" id="PTHR12532:SF0">
    <property type="entry name" value="TRANSLATIONAL ACTIVATOR OF CYTOCHROME C OXIDASE 1"/>
    <property type="match status" value="1"/>
</dbReference>
<dbReference type="Pfam" id="PF20772">
    <property type="entry name" value="TACO1_YebC_N"/>
    <property type="match status" value="1"/>
</dbReference>
<dbReference type="Pfam" id="PF01709">
    <property type="entry name" value="Transcrip_reg"/>
    <property type="match status" value="1"/>
</dbReference>
<dbReference type="SUPFAM" id="SSF75625">
    <property type="entry name" value="YebC-like"/>
    <property type="match status" value="1"/>
</dbReference>
<sequence>MGRKWANIVAKKTAKDGANSKVYAKFGVEIYVAAKKGDPDPESNSALKFVIDRAKQAQVPKHIIDKAIDKAKGNTDETFTEGRYEGFGPNGSMLIVDTLTSNVNRTAANVRAAFGKNGGNMGASGSVSYLFDNKGVIVFGGEDADAVFEQLLEADVDVDDVEAQEGTITVYTAPTDLHKAIVALRESGIEEFQVTELEMIPQSEVELSGEDLETFEKLYSVLEDDEDVQKIYTNVDGF</sequence>
<name>Y1897_STRPS</name>
<proteinExistence type="inferred from homology"/>
<evidence type="ECO:0000255" key="1">
    <source>
        <dbReference type="HAMAP-Rule" id="MF_00918"/>
    </source>
</evidence>
<comment type="subcellular location">
    <subcellularLocation>
        <location evidence="1">Cytoplasm</location>
    </subcellularLocation>
</comment>
<comment type="similarity">
    <text evidence="1">Belongs to the TACO1 family. YeeN subfamily.</text>
</comment>
<gene>
    <name type="ordered locus">SPCG_1897</name>
</gene>
<organism>
    <name type="scientific">Streptococcus pneumoniae (strain CGSP14)</name>
    <dbReference type="NCBI Taxonomy" id="516950"/>
    <lineage>
        <taxon>Bacteria</taxon>
        <taxon>Bacillati</taxon>
        <taxon>Bacillota</taxon>
        <taxon>Bacilli</taxon>
        <taxon>Lactobacillales</taxon>
        <taxon>Streptococcaceae</taxon>
        <taxon>Streptococcus</taxon>
    </lineage>
</organism>